<protein>
    <recommendedName>
        <fullName evidence="1">Arginine--tRNA ligase</fullName>
        <ecNumber evidence="1">6.1.1.19</ecNumber>
    </recommendedName>
    <alternativeName>
        <fullName evidence="1">Arginyl-tRNA synthetase</fullName>
        <shortName evidence="1">ArgRS</shortName>
    </alternativeName>
</protein>
<accession>Q971X1</accession>
<accession>F9VNZ0</accession>
<evidence type="ECO:0000255" key="1">
    <source>
        <dbReference type="HAMAP-Rule" id="MF_00123"/>
    </source>
</evidence>
<dbReference type="EC" id="6.1.1.19" evidence="1"/>
<dbReference type="EMBL" id="BA000023">
    <property type="protein sequence ID" value="BAK54498.1"/>
    <property type="molecule type" value="Genomic_DNA"/>
</dbReference>
<dbReference type="RefSeq" id="WP_010979277.1">
    <property type="nucleotide sequence ID" value="NC_003106.2"/>
</dbReference>
<dbReference type="SMR" id="Q971X1"/>
<dbReference type="STRING" id="273063.STK_12580"/>
<dbReference type="GeneID" id="1459256"/>
<dbReference type="KEGG" id="sto:STK_12580"/>
<dbReference type="PATRIC" id="fig|273063.9.peg.1416"/>
<dbReference type="eggNOG" id="arCOG00487">
    <property type="taxonomic scope" value="Archaea"/>
</dbReference>
<dbReference type="OrthoDB" id="372102at2157"/>
<dbReference type="Proteomes" id="UP000001015">
    <property type="component" value="Chromosome"/>
</dbReference>
<dbReference type="GO" id="GO:0005737">
    <property type="term" value="C:cytoplasm"/>
    <property type="evidence" value="ECO:0007669"/>
    <property type="project" value="UniProtKB-SubCell"/>
</dbReference>
<dbReference type="GO" id="GO:0004814">
    <property type="term" value="F:arginine-tRNA ligase activity"/>
    <property type="evidence" value="ECO:0007669"/>
    <property type="project" value="UniProtKB-UniRule"/>
</dbReference>
<dbReference type="GO" id="GO:0005524">
    <property type="term" value="F:ATP binding"/>
    <property type="evidence" value="ECO:0007669"/>
    <property type="project" value="UniProtKB-UniRule"/>
</dbReference>
<dbReference type="GO" id="GO:0006420">
    <property type="term" value="P:arginyl-tRNA aminoacylation"/>
    <property type="evidence" value="ECO:0007669"/>
    <property type="project" value="UniProtKB-UniRule"/>
</dbReference>
<dbReference type="CDD" id="cd00671">
    <property type="entry name" value="ArgRS_core"/>
    <property type="match status" value="1"/>
</dbReference>
<dbReference type="Gene3D" id="3.30.1360.70">
    <property type="entry name" value="Arginyl tRNA synthetase N-terminal domain"/>
    <property type="match status" value="1"/>
</dbReference>
<dbReference type="Gene3D" id="3.40.50.620">
    <property type="entry name" value="HUPs"/>
    <property type="match status" value="1"/>
</dbReference>
<dbReference type="Gene3D" id="1.10.730.10">
    <property type="entry name" value="Isoleucyl-tRNA Synthetase, Domain 1"/>
    <property type="match status" value="1"/>
</dbReference>
<dbReference type="HAMAP" id="MF_00123">
    <property type="entry name" value="Arg_tRNA_synth"/>
    <property type="match status" value="1"/>
</dbReference>
<dbReference type="InterPro" id="IPR001278">
    <property type="entry name" value="Arg-tRNA-ligase"/>
</dbReference>
<dbReference type="InterPro" id="IPR036695">
    <property type="entry name" value="Arg-tRNA-synth_N_sf"/>
</dbReference>
<dbReference type="InterPro" id="IPR035684">
    <property type="entry name" value="ArgRS_core"/>
</dbReference>
<dbReference type="InterPro" id="IPR008909">
    <property type="entry name" value="DALR_anticod-bd"/>
</dbReference>
<dbReference type="InterPro" id="IPR014729">
    <property type="entry name" value="Rossmann-like_a/b/a_fold"/>
</dbReference>
<dbReference type="InterPro" id="IPR009080">
    <property type="entry name" value="tRNAsynth_Ia_anticodon-bd"/>
</dbReference>
<dbReference type="NCBIfam" id="TIGR00456">
    <property type="entry name" value="argS"/>
    <property type="match status" value="1"/>
</dbReference>
<dbReference type="NCBIfam" id="NF002446">
    <property type="entry name" value="PRK01611.3-3"/>
    <property type="match status" value="1"/>
</dbReference>
<dbReference type="PANTHER" id="PTHR11956:SF5">
    <property type="entry name" value="ARGININE--TRNA LIGASE, CYTOPLASMIC"/>
    <property type="match status" value="1"/>
</dbReference>
<dbReference type="PANTHER" id="PTHR11956">
    <property type="entry name" value="ARGINYL-TRNA SYNTHETASE"/>
    <property type="match status" value="1"/>
</dbReference>
<dbReference type="Pfam" id="PF05746">
    <property type="entry name" value="DALR_1"/>
    <property type="match status" value="1"/>
</dbReference>
<dbReference type="Pfam" id="PF00750">
    <property type="entry name" value="tRNA-synt_1d"/>
    <property type="match status" value="2"/>
</dbReference>
<dbReference type="PRINTS" id="PR01038">
    <property type="entry name" value="TRNASYNTHARG"/>
</dbReference>
<dbReference type="SMART" id="SM00836">
    <property type="entry name" value="DALR_1"/>
    <property type="match status" value="1"/>
</dbReference>
<dbReference type="SUPFAM" id="SSF47323">
    <property type="entry name" value="Anticodon-binding domain of a subclass of class I aminoacyl-tRNA synthetases"/>
    <property type="match status" value="1"/>
</dbReference>
<dbReference type="SUPFAM" id="SSF55190">
    <property type="entry name" value="Arginyl-tRNA synthetase (ArgRS), N-terminal 'additional' domain"/>
    <property type="match status" value="1"/>
</dbReference>
<dbReference type="SUPFAM" id="SSF52374">
    <property type="entry name" value="Nucleotidylyl transferase"/>
    <property type="match status" value="1"/>
</dbReference>
<reference key="1">
    <citation type="journal article" date="2001" name="DNA Res.">
        <title>Complete genome sequence of an aerobic thermoacidophilic Crenarchaeon, Sulfolobus tokodaii strain7.</title>
        <authorList>
            <person name="Kawarabayasi Y."/>
            <person name="Hino Y."/>
            <person name="Horikawa H."/>
            <person name="Jin-no K."/>
            <person name="Takahashi M."/>
            <person name="Sekine M."/>
            <person name="Baba S."/>
            <person name="Ankai A."/>
            <person name="Kosugi H."/>
            <person name="Hosoyama A."/>
            <person name="Fukui S."/>
            <person name="Nagai Y."/>
            <person name="Nishijima K."/>
            <person name="Otsuka R."/>
            <person name="Nakazawa H."/>
            <person name="Takamiya M."/>
            <person name="Kato Y."/>
            <person name="Yoshizawa T."/>
            <person name="Tanaka T."/>
            <person name="Kudoh Y."/>
            <person name="Yamazaki J."/>
            <person name="Kushida N."/>
            <person name="Oguchi A."/>
            <person name="Aoki K."/>
            <person name="Masuda S."/>
            <person name="Yanagii M."/>
            <person name="Nishimura M."/>
            <person name="Yamagishi A."/>
            <person name="Oshima T."/>
            <person name="Kikuchi H."/>
        </authorList>
    </citation>
    <scope>NUCLEOTIDE SEQUENCE [LARGE SCALE GENOMIC DNA]</scope>
    <source>
        <strain>DSM 16993 / JCM 10545 / NBRC 100140 / 7</strain>
    </source>
</reference>
<proteinExistence type="inferred from homology"/>
<gene>
    <name evidence="1" type="primary">argS</name>
    <name type="ordered locus">STK_12580</name>
</gene>
<name>SYR_SULTO</name>
<feature type="chain" id="PRO_0000151657" description="Arginine--tRNA ligase">
    <location>
        <begin position="1"/>
        <end position="623"/>
    </location>
</feature>
<feature type="short sequence motif" description="'HIGH' region">
    <location>
        <begin position="116"/>
        <end position="126"/>
    </location>
</feature>
<keyword id="KW-0030">Aminoacyl-tRNA synthetase</keyword>
<keyword id="KW-0067">ATP-binding</keyword>
<keyword id="KW-0963">Cytoplasm</keyword>
<keyword id="KW-0436">Ligase</keyword>
<keyword id="KW-0547">Nucleotide-binding</keyword>
<keyword id="KW-0648">Protein biosynthesis</keyword>
<keyword id="KW-1185">Reference proteome</keyword>
<sequence length="623" mass="71693">MNPIKEVKLEFAKILSERLSIDQNKIYENFEYPPKEQMGDVSLPLPTVTKNKELLNISDFPSGGKLIREIKKAGIYINGVINESELFKLIFTNFPEDYGIEKIQKPQRVVVEHTSANPIHPLHVGHLRNAILGDVIARMLKARGHEVNTRFYVNDAGRQVAILTLGYLLLGEPNPPRDEKIDQWIGVIYAITNILIEINQLKKELSSSNEEEYRQKISKLDELISLAGKHREKYPEIFDKLADEISKIENIEEKIQNIIKNYERHSDEKIVNVIRKLVNWTLEGFKDSLKILDIHFDNFDYESDLLWSKRVDEIVKLALSSKNIKEHKGTIALSLDLDPEARKRLNIPLGLELPPLVLVRSDGTTLYTTRDIAYSLYKFEVFYANKVINVIAEQQSVPQMQLRASLYLLGFKDIAENLIHYSYGMVNLQGMRMSGRLGRYISLDEIINEVKEVAENKIKEKGGDLNNLLDIVNSAIRYAILSVSANKPVSFNIKNIVDFDQNSGPYLQYTYARAYNILAKNEEKLDINKVDFSDIVDDKRRLLISIAKFPEVATKAVDELRPEDLLGFMRSIADIFNRWYNFERVLQEPNEGKRMLRLFIVKGVERILYNGLSIVGIKPLKRM</sequence>
<organism>
    <name type="scientific">Sulfurisphaera tokodaii (strain DSM 16993 / JCM 10545 / NBRC 100140 / 7)</name>
    <name type="common">Sulfolobus tokodaii</name>
    <dbReference type="NCBI Taxonomy" id="273063"/>
    <lineage>
        <taxon>Archaea</taxon>
        <taxon>Thermoproteota</taxon>
        <taxon>Thermoprotei</taxon>
        <taxon>Sulfolobales</taxon>
        <taxon>Sulfolobaceae</taxon>
        <taxon>Sulfurisphaera</taxon>
    </lineage>
</organism>
<comment type="catalytic activity">
    <reaction evidence="1">
        <text>tRNA(Arg) + L-arginine + ATP = L-arginyl-tRNA(Arg) + AMP + diphosphate</text>
        <dbReference type="Rhea" id="RHEA:20301"/>
        <dbReference type="Rhea" id="RHEA-COMP:9658"/>
        <dbReference type="Rhea" id="RHEA-COMP:9673"/>
        <dbReference type="ChEBI" id="CHEBI:30616"/>
        <dbReference type="ChEBI" id="CHEBI:32682"/>
        <dbReference type="ChEBI" id="CHEBI:33019"/>
        <dbReference type="ChEBI" id="CHEBI:78442"/>
        <dbReference type="ChEBI" id="CHEBI:78513"/>
        <dbReference type="ChEBI" id="CHEBI:456215"/>
        <dbReference type="EC" id="6.1.1.19"/>
    </reaction>
</comment>
<comment type="subcellular location">
    <subcellularLocation>
        <location evidence="1">Cytoplasm</location>
    </subcellularLocation>
</comment>
<comment type="similarity">
    <text evidence="1">Belongs to the class-I aminoacyl-tRNA synthetase family.</text>
</comment>